<dbReference type="EC" id="3.4.21.-" evidence="17"/>
<dbReference type="EMBL" id="U12682">
    <property type="protein sequence ID" value="AAB63525.1"/>
    <property type="molecule type" value="mRNA"/>
</dbReference>
<dbReference type="EMBL" id="BX284601">
    <property type="protein sequence ID" value="CAB04086.1"/>
    <property type="molecule type" value="Genomic_DNA"/>
</dbReference>
<dbReference type="PIR" id="T20759">
    <property type="entry name" value="T20759"/>
</dbReference>
<dbReference type="PIR" id="T20760">
    <property type="entry name" value="T20760"/>
</dbReference>
<dbReference type="RefSeq" id="NP_492974.2">
    <property type="nucleotide sequence ID" value="NM_060573.5"/>
</dbReference>
<dbReference type="SMR" id="O17798"/>
<dbReference type="BioGRID" id="38457">
    <property type="interactions" value="2"/>
</dbReference>
<dbReference type="FunCoup" id="O17798">
    <property type="interactions" value="179"/>
</dbReference>
<dbReference type="STRING" id="6239.F11A6.1a.1"/>
<dbReference type="MEROPS" id="S08.047"/>
<dbReference type="GlyCosmos" id="O17798">
    <property type="glycosylation" value="4 sites, No reported glycans"/>
</dbReference>
<dbReference type="PaxDb" id="6239-F11A6.1b"/>
<dbReference type="PeptideAtlas" id="O17798"/>
<dbReference type="EnsemblMetazoa" id="F11A6.1a.1">
    <property type="protein sequence ID" value="F11A6.1a.1"/>
    <property type="gene ID" value="WBGene00002232"/>
</dbReference>
<dbReference type="EnsemblMetazoa" id="F11A6.1a.2">
    <property type="protein sequence ID" value="F11A6.1a.2"/>
    <property type="gene ID" value="WBGene00002232"/>
</dbReference>
<dbReference type="GeneID" id="173051"/>
<dbReference type="KEGG" id="cel:CELE_F11A6.1"/>
<dbReference type="UCSC" id="F11A6.1a.2">
    <property type="organism name" value="c. elegans"/>
</dbReference>
<dbReference type="AGR" id="WB:WBGene00002232"/>
<dbReference type="CTD" id="173051"/>
<dbReference type="WormBase" id="F11A6.1a">
    <property type="protein sequence ID" value="CE17653"/>
    <property type="gene ID" value="WBGene00002232"/>
    <property type="gene designation" value="kpc-1"/>
</dbReference>
<dbReference type="GeneTree" id="ENSGT00940000167869"/>
<dbReference type="HOGENOM" id="CLU_002976_4_1_1"/>
<dbReference type="InParanoid" id="O17798"/>
<dbReference type="OMA" id="LHHACTN"/>
<dbReference type="OrthoDB" id="300641at2759"/>
<dbReference type="PhylomeDB" id="O17798"/>
<dbReference type="BRENDA" id="3.4.21.75">
    <property type="organism ID" value="1045"/>
</dbReference>
<dbReference type="Reactome" id="R-CEL-1592389">
    <property type="pathway name" value="Activation of Matrix Metalloproteinases"/>
</dbReference>
<dbReference type="Reactome" id="R-CEL-186797">
    <property type="pathway name" value="Signaling by PDGF"/>
</dbReference>
<dbReference type="Reactome" id="R-CEL-2173789">
    <property type="pathway name" value="TGF-beta receptor signaling activates SMADs"/>
</dbReference>
<dbReference type="Reactome" id="R-CEL-2173796">
    <property type="pathway name" value="SMAD2/SMAD3:SMAD4 heterotrimer regulates transcription"/>
</dbReference>
<dbReference type="PRO" id="PR:O17798"/>
<dbReference type="Proteomes" id="UP000001940">
    <property type="component" value="Chromosome I"/>
</dbReference>
<dbReference type="Bgee" id="WBGene00002232">
    <property type="expression patterns" value="Expressed in pharyngeal muscle cell (C elegans) and 3 other cell types or tissues"/>
</dbReference>
<dbReference type="GO" id="GO:0030424">
    <property type="term" value="C:axon"/>
    <property type="evidence" value="ECO:0007669"/>
    <property type="project" value="UniProtKB-SubCell"/>
</dbReference>
<dbReference type="GO" id="GO:0000139">
    <property type="term" value="C:Golgi membrane"/>
    <property type="evidence" value="ECO:0000318"/>
    <property type="project" value="GO_Central"/>
</dbReference>
<dbReference type="GO" id="GO:0043025">
    <property type="term" value="C:neuronal cell body"/>
    <property type="evidence" value="ECO:0000314"/>
    <property type="project" value="WormBase"/>
</dbReference>
<dbReference type="GO" id="GO:0043204">
    <property type="term" value="C:perikaryon"/>
    <property type="evidence" value="ECO:0007669"/>
    <property type="project" value="UniProtKB-SubCell"/>
</dbReference>
<dbReference type="GO" id="GO:0005886">
    <property type="term" value="C:plasma membrane"/>
    <property type="evidence" value="ECO:0007669"/>
    <property type="project" value="UniProtKB-SubCell"/>
</dbReference>
<dbReference type="GO" id="GO:0005802">
    <property type="term" value="C:trans-Golgi network"/>
    <property type="evidence" value="ECO:0000318"/>
    <property type="project" value="GO_Central"/>
</dbReference>
<dbReference type="GO" id="GO:0046872">
    <property type="term" value="F:metal ion binding"/>
    <property type="evidence" value="ECO:0007669"/>
    <property type="project" value="UniProtKB-KW"/>
</dbReference>
<dbReference type="GO" id="GO:0004252">
    <property type="term" value="F:serine-type endopeptidase activity"/>
    <property type="evidence" value="ECO:0000315"/>
    <property type="project" value="UniProtKB"/>
</dbReference>
<dbReference type="GO" id="GO:0005102">
    <property type="term" value="F:signaling receptor binding"/>
    <property type="evidence" value="ECO:0000353"/>
    <property type="project" value="UniProtKB"/>
</dbReference>
<dbReference type="GO" id="GO:0048813">
    <property type="term" value="P:dendrite morphogenesis"/>
    <property type="evidence" value="ECO:0000315"/>
    <property type="project" value="WormBase"/>
</dbReference>
<dbReference type="GO" id="GO:0070593">
    <property type="term" value="P:dendrite self-avoidance"/>
    <property type="evidence" value="ECO:0000315"/>
    <property type="project" value="UniProtKB"/>
</dbReference>
<dbReference type="GO" id="GO:0010467">
    <property type="term" value="P:gene expression"/>
    <property type="evidence" value="ECO:0000315"/>
    <property type="project" value="UniProtKB"/>
</dbReference>
<dbReference type="GO" id="GO:0030070">
    <property type="term" value="P:insulin processing"/>
    <property type="evidence" value="ECO:0000315"/>
    <property type="project" value="WormBase"/>
</dbReference>
<dbReference type="GO" id="GO:1905910">
    <property type="term" value="P:negative regulation of dauer entry"/>
    <property type="evidence" value="ECO:0000316"/>
    <property type="project" value="UniProtKB"/>
</dbReference>
<dbReference type="GO" id="GO:2000009">
    <property type="term" value="P:negative regulation of protein localization to cell surface"/>
    <property type="evidence" value="ECO:0000315"/>
    <property type="project" value="UniProtKB"/>
</dbReference>
<dbReference type="GO" id="GO:0016486">
    <property type="term" value="P:peptide hormone processing"/>
    <property type="evidence" value="ECO:0000318"/>
    <property type="project" value="GO_Central"/>
</dbReference>
<dbReference type="GO" id="GO:1900006">
    <property type="term" value="P:positive regulation of dendrite development"/>
    <property type="evidence" value="ECO:0000315"/>
    <property type="project" value="UniProtKB"/>
</dbReference>
<dbReference type="GO" id="GO:1903861">
    <property type="term" value="P:positive regulation of dendrite extension"/>
    <property type="evidence" value="ECO:0000315"/>
    <property type="project" value="UniProtKB"/>
</dbReference>
<dbReference type="GO" id="GO:0050775">
    <property type="term" value="P:positive regulation of dendrite morphogenesis"/>
    <property type="evidence" value="ECO:0000315"/>
    <property type="project" value="UniProtKB"/>
</dbReference>
<dbReference type="GO" id="GO:0045887">
    <property type="term" value="P:positive regulation of synaptic assembly at neuromuscular junction"/>
    <property type="evidence" value="ECO:0000316"/>
    <property type="project" value="UniProtKB"/>
</dbReference>
<dbReference type="GO" id="GO:0036010">
    <property type="term" value="P:protein localization to endosome"/>
    <property type="evidence" value="ECO:0000315"/>
    <property type="project" value="UniProtKB"/>
</dbReference>
<dbReference type="GO" id="GO:1903859">
    <property type="term" value="P:regulation of dendrite extension"/>
    <property type="evidence" value="ECO:0000316"/>
    <property type="project" value="UniProtKB"/>
</dbReference>
<dbReference type="GO" id="GO:0048814">
    <property type="term" value="P:regulation of dendrite morphogenesis"/>
    <property type="evidence" value="ECO:0000316"/>
    <property type="project" value="UniProtKB"/>
</dbReference>
<dbReference type="GO" id="GO:2001222">
    <property type="term" value="P:regulation of neuron migration"/>
    <property type="evidence" value="ECO:0000315"/>
    <property type="project" value="UniProtKB"/>
</dbReference>
<dbReference type="GO" id="GO:0031638">
    <property type="term" value="P:zymogen activation"/>
    <property type="evidence" value="ECO:0000315"/>
    <property type="project" value="UniProtKB"/>
</dbReference>
<dbReference type="CDD" id="cd04059">
    <property type="entry name" value="Peptidases_S8_Protein_convertases_Kexins_Furin-like"/>
    <property type="match status" value="1"/>
</dbReference>
<dbReference type="FunFam" id="3.40.50.200:FF:000001">
    <property type="entry name" value="Furin 2, isoform B"/>
    <property type="match status" value="1"/>
</dbReference>
<dbReference type="FunFam" id="2.60.120.260:FF:000006">
    <property type="entry name" value="Proprotein convertase subtilisin/kexin type 5"/>
    <property type="match status" value="1"/>
</dbReference>
<dbReference type="FunFam" id="3.30.70.850:FF:000001">
    <property type="entry name" value="Proprotein convertase subtilisin/kexin type 5"/>
    <property type="match status" value="1"/>
</dbReference>
<dbReference type="Gene3D" id="2.60.120.260">
    <property type="entry name" value="Galactose-binding domain-like"/>
    <property type="match status" value="1"/>
</dbReference>
<dbReference type="Gene3D" id="3.30.70.850">
    <property type="entry name" value="Peptidase S8, pro-domain"/>
    <property type="match status" value="1"/>
</dbReference>
<dbReference type="Gene3D" id="3.40.50.200">
    <property type="entry name" value="Peptidase S8/S53 domain"/>
    <property type="match status" value="1"/>
</dbReference>
<dbReference type="InterPro" id="IPR008979">
    <property type="entry name" value="Galactose-bd-like_sf"/>
</dbReference>
<dbReference type="InterPro" id="IPR034182">
    <property type="entry name" value="Kexin/furin"/>
</dbReference>
<dbReference type="InterPro" id="IPR002884">
    <property type="entry name" value="P_dom"/>
</dbReference>
<dbReference type="InterPro" id="IPR000209">
    <property type="entry name" value="Peptidase_S8/S53_dom"/>
</dbReference>
<dbReference type="InterPro" id="IPR036852">
    <property type="entry name" value="Peptidase_S8/S53_dom_sf"/>
</dbReference>
<dbReference type="InterPro" id="IPR023827">
    <property type="entry name" value="Peptidase_S8_Asp-AS"/>
</dbReference>
<dbReference type="InterPro" id="IPR022398">
    <property type="entry name" value="Peptidase_S8_His-AS"/>
</dbReference>
<dbReference type="InterPro" id="IPR023828">
    <property type="entry name" value="Peptidase_S8_Ser-AS"/>
</dbReference>
<dbReference type="InterPro" id="IPR015500">
    <property type="entry name" value="Peptidase_S8_subtilisin-rel"/>
</dbReference>
<dbReference type="InterPro" id="IPR032815">
    <property type="entry name" value="S8_pro-domain"/>
</dbReference>
<dbReference type="InterPro" id="IPR038466">
    <property type="entry name" value="S8_pro-domain_sf"/>
</dbReference>
<dbReference type="PANTHER" id="PTHR42884:SF3">
    <property type="entry name" value="FURIN-LIKE PROTEASE 1, ISOFORMS 1_1-X_2"/>
    <property type="match status" value="1"/>
</dbReference>
<dbReference type="PANTHER" id="PTHR42884">
    <property type="entry name" value="PROPROTEIN CONVERTASE SUBTILISIN/KEXIN-RELATED"/>
    <property type="match status" value="1"/>
</dbReference>
<dbReference type="Pfam" id="PF01483">
    <property type="entry name" value="P_proprotein"/>
    <property type="match status" value="1"/>
</dbReference>
<dbReference type="Pfam" id="PF00082">
    <property type="entry name" value="Peptidase_S8"/>
    <property type="match status" value="1"/>
</dbReference>
<dbReference type="Pfam" id="PF16470">
    <property type="entry name" value="S8_pro-domain"/>
    <property type="match status" value="1"/>
</dbReference>
<dbReference type="PRINTS" id="PR00723">
    <property type="entry name" value="SUBTILISIN"/>
</dbReference>
<dbReference type="SUPFAM" id="SSF49785">
    <property type="entry name" value="Galactose-binding domain-like"/>
    <property type="match status" value="1"/>
</dbReference>
<dbReference type="SUPFAM" id="SSF54897">
    <property type="entry name" value="Protease propeptides/inhibitors"/>
    <property type="match status" value="1"/>
</dbReference>
<dbReference type="SUPFAM" id="SSF52743">
    <property type="entry name" value="Subtilisin-like"/>
    <property type="match status" value="1"/>
</dbReference>
<dbReference type="PROSITE" id="PS51829">
    <property type="entry name" value="P_HOMO_B"/>
    <property type="match status" value="1"/>
</dbReference>
<dbReference type="PROSITE" id="PS51892">
    <property type="entry name" value="SUBTILASE"/>
    <property type="match status" value="1"/>
</dbReference>
<dbReference type="PROSITE" id="PS00136">
    <property type="entry name" value="SUBTILASE_ASP"/>
    <property type="match status" value="1"/>
</dbReference>
<dbReference type="PROSITE" id="PS00137">
    <property type="entry name" value="SUBTILASE_HIS"/>
    <property type="match status" value="1"/>
</dbReference>
<dbReference type="PROSITE" id="PS00138">
    <property type="entry name" value="SUBTILASE_SER"/>
    <property type="match status" value="1"/>
</dbReference>
<feature type="signal peptide" evidence="3">
    <location>
        <begin position="1"/>
        <end position="33"/>
    </location>
</feature>
<feature type="propeptide" id="PRO_0000430490" evidence="1">
    <location>
        <begin position="34"/>
        <end position="139"/>
    </location>
</feature>
<feature type="chain" id="PRO_0000430491" description="Furin-like protease kpc-1" evidence="1">
    <location>
        <begin position="140"/>
        <end position="692"/>
    </location>
</feature>
<feature type="topological domain" description="Lumenal" evidence="16">
    <location>
        <begin position="140"/>
        <end position="670"/>
    </location>
</feature>
<feature type="transmembrane region" description="Helical" evidence="3">
    <location>
        <begin position="671"/>
        <end position="692"/>
    </location>
</feature>
<feature type="domain" description="Peptidase S8" evidence="7">
    <location>
        <begin position="182"/>
        <end position="503"/>
    </location>
</feature>
<feature type="domain" description="P/Homo B" evidence="6">
    <location>
        <begin position="512"/>
        <end position="646"/>
    </location>
</feature>
<feature type="region of interest" description="Disordered" evidence="8">
    <location>
        <begin position="152"/>
        <end position="177"/>
    </location>
</feature>
<feature type="region of interest" description="Disordered" evidence="8">
    <location>
        <begin position="230"/>
        <end position="249"/>
    </location>
</feature>
<feature type="short sequence motif" description="Cell attachment site" evidence="4">
    <location>
        <begin position="570"/>
        <end position="572"/>
    </location>
</feature>
<feature type="active site" description="Charge relay system" evidence="7">
    <location>
        <position position="221"/>
    </location>
</feature>
<feature type="active site" description="Charge relay system" evidence="7">
    <location>
        <position position="262"/>
    </location>
</feature>
<feature type="active site" description="Charge relay system" evidence="7">
    <location>
        <position position="436"/>
    </location>
</feature>
<feature type="binding site" evidence="1">
    <location>
        <position position="176"/>
    </location>
    <ligand>
        <name>Ca(2+)</name>
        <dbReference type="ChEBI" id="CHEBI:29108"/>
        <label>1</label>
    </ligand>
</feature>
<feature type="binding site" evidence="1">
    <location>
        <position position="222"/>
    </location>
    <ligand>
        <name>substrate</name>
    </ligand>
</feature>
<feature type="binding site" evidence="1">
    <location>
        <position position="230"/>
    </location>
    <ligand>
        <name>Ca(2+)</name>
        <dbReference type="ChEBI" id="CHEBI:29108"/>
        <label>1</label>
    </ligand>
</feature>
<feature type="binding site" evidence="1">
    <location>
        <position position="242"/>
    </location>
    <ligand>
        <name>Ca(2+)</name>
        <dbReference type="ChEBI" id="CHEBI:29108"/>
        <label>2</label>
    </ligand>
</feature>
<feature type="binding site" evidence="1">
    <location>
        <position position="247"/>
    </location>
    <ligand>
        <name>Ca(2+)</name>
        <dbReference type="ChEBI" id="CHEBI:29108"/>
        <label>2</label>
    </ligand>
</feature>
<feature type="binding site" evidence="1">
    <location>
        <position position="249"/>
    </location>
    <ligand>
        <name>Ca(2+)</name>
        <dbReference type="ChEBI" id="CHEBI:29108"/>
        <label>2</label>
    </ligand>
</feature>
<feature type="binding site" evidence="1">
    <location>
        <begin position="259"/>
        <end position="260"/>
    </location>
    <ligand>
        <name>substrate</name>
    </ligand>
</feature>
<feature type="binding site" evidence="1">
    <location>
        <position position="273"/>
    </location>
    <ligand>
        <name>Ca(2+)</name>
        <dbReference type="ChEBI" id="CHEBI:29108"/>
        <label>1</label>
    </ligand>
</feature>
<feature type="binding site" evidence="1">
    <location>
        <position position="276"/>
    </location>
    <ligand>
        <name>Ca(2+)</name>
        <dbReference type="ChEBI" id="CHEBI:29108"/>
        <label>1</label>
    </ligand>
</feature>
<feature type="binding site" evidence="1">
    <location>
        <position position="278"/>
    </location>
    <ligand>
        <name>Ca(2+)</name>
        <dbReference type="ChEBI" id="CHEBI:29108"/>
        <label>1</label>
    </ligand>
</feature>
<feature type="binding site" evidence="1">
    <location>
        <position position="280"/>
    </location>
    <ligand>
        <name>Ca(2+)</name>
        <dbReference type="ChEBI" id="CHEBI:29108"/>
        <label>1</label>
    </ligand>
</feature>
<feature type="binding site" evidence="1">
    <location>
        <position position="304"/>
    </location>
    <ligand>
        <name>substrate</name>
    </ligand>
</feature>
<feature type="binding site" evidence="1">
    <location>
        <begin position="321"/>
        <end position="326"/>
    </location>
    <ligand>
        <name>substrate</name>
    </ligand>
</feature>
<feature type="binding site" evidence="1">
    <location>
        <position position="326"/>
    </location>
    <ligand>
        <name>Ca(2+)</name>
        <dbReference type="ChEBI" id="CHEBI:29108"/>
        <label>3</label>
    </ligand>
</feature>
<feature type="binding site" evidence="1">
    <location>
        <position position="332"/>
    </location>
    <ligand>
        <name>substrate</name>
    </ligand>
</feature>
<feature type="binding site" evidence="1">
    <location>
        <begin position="360"/>
        <end position="363"/>
    </location>
    <ligand>
        <name>substrate</name>
    </ligand>
</feature>
<feature type="binding site" evidence="1">
    <location>
        <position position="369"/>
    </location>
    <ligand>
        <name>Ca(2+)</name>
        <dbReference type="ChEBI" id="CHEBI:29108"/>
        <label>3</label>
    </ligand>
</feature>
<feature type="binding site" evidence="1">
    <location>
        <position position="374"/>
    </location>
    <ligand>
        <name>substrate</name>
    </ligand>
</feature>
<feature type="binding site" evidence="1">
    <location>
        <position position="376"/>
    </location>
    <ligand>
        <name>substrate</name>
    </ligand>
</feature>
<feature type="binding site" evidence="1">
    <location>
        <position position="399"/>
    </location>
    <ligand>
        <name>Ca(2+)</name>
        <dbReference type="ChEBI" id="CHEBI:29108"/>
        <label>3</label>
    </ligand>
</feature>
<feature type="binding site" evidence="1">
    <location>
        <position position="436"/>
    </location>
    <ligand>
        <name>substrate</name>
    </ligand>
</feature>
<feature type="glycosylation site" description="N-linked (GlcNAc...) asparagine" evidence="5">
    <location>
        <position position="3"/>
    </location>
</feature>
<feature type="glycosylation site" description="N-linked (GlcNAc...) asparagine" evidence="5">
    <location>
        <position position="275"/>
    </location>
</feature>
<feature type="glycosylation site" description="N-linked (GlcNAc...) asparagine" evidence="5">
    <location>
        <position position="455"/>
    </location>
</feature>
<feature type="glycosylation site" description="N-linked (GlcNAc...) asparagine" evidence="5">
    <location>
        <position position="487"/>
    </location>
</feature>
<feature type="disulfide bond" evidence="2">
    <location>
        <begin position="279"/>
        <end position="428"/>
    </location>
</feature>
<feature type="disulfide bond" evidence="2">
    <location>
        <begin position="371"/>
        <end position="401"/>
    </location>
</feature>
<feature type="disulfide bond" evidence="2">
    <location>
        <begin position="518"/>
        <end position="544"/>
    </location>
</feature>
<feature type="mutagenesis site" description="In wy1060; loss of propeptide cleavage, trapped secondary dendrite branches and loss of tertiary and quaternary dendrite branches; when associated with A-143." evidence="12">
    <original>R</original>
    <variation>A</variation>
    <location>
        <position position="136"/>
    </location>
</feature>
<feature type="mutagenesis site" description="In wy1060; loss of propeptide cleavage, trapped secondary dendrite branches and loss of tertiary and quaternary dendrite branches; when associated with A-136." evidence="12">
    <original>R</original>
    <variation>A</variation>
    <location>
        <position position="143"/>
    </location>
</feature>
<feature type="mutagenesis site" description="In gk(779937); increased secondary dendritic branches in PVD neurons." evidence="11">
    <original>G</original>
    <variation>R</variation>
    <location>
        <position position="263"/>
    </location>
</feature>
<feature type="mutagenesis site" description="In gk(333538); normal secondary dendritic branches in PVD neurons." evidence="11">
    <original>R</original>
    <variation>Q</variation>
    <location>
        <position position="265"/>
    </location>
</feature>
<feature type="mutagenesis site" description="In dz185; increased secondary dendritic branches in PVD neurons." evidence="11">
    <original>R</original>
    <variation>W</variation>
    <location>
        <position position="265"/>
    </location>
</feature>
<feature type="mutagenesis site" description="In my24; highly disorganized and truncated dauer-specific branching of the IL2Q neuron and disorganized and truncated branching of the PVD and FLP neurons in adults." evidence="9">
    <original>P</original>
    <variation>L</variation>
    <location>
        <position position="440"/>
    </location>
</feature>
<feature type="mutagenesis site" description="In xr58; partial trapping of secondary dendrite branches next to primary dendrite branches. Forms tertiary and quaternary branches but with substantial overlap between tertiary dendrite branches. Increased dma-1 protein levels in PVD neuron dendrites." evidence="12">
    <original>P</original>
    <variation>S</variation>
    <location>
        <position position="440"/>
    </location>
</feature>
<feature type="mutagenesis site" description="In ns623; uncoordinated movements in a chin-1 ns399 mutant background. Impaired nerve ring assembly due to follower axons of neurons including the amphid-commissure neuron (AFD), and the non-commissural interneurons AIY and PVQ, failing to extend dorsally and enter the nerve ring. SubL pioneer axons enter the nerve ring, but exhibit fasciculation defects." evidence="13">
    <original>S</original>
    <variation>T</variation>
    <location>
        <position position="579"/>
    </location>
</feature>
<feature type="sequence conflict" description="In Ref. 1; AAB63525." evidence="16" ref="1">
    <original>A</original>
    <variation>V</variation>
    <location>
        <position position="205"/>
    </location>
</feature>
<keyword id="KW-0106">Calcium</keyword>
<keyword id="KW-1003">Cell membrane</keyword>
<keyword id="KW-0966">Cell projection</keyword>
<keyword id="KW-0165">Cleavage on pair of basic residues</keyword>
<keyword id="KW-1015">Disulfide bond</keyword>
<keyword id="KW-0325">Glycoprotein</keyword>
<keyword id="KW-0378">Hydrolase</keyword>
<keyword id="KW-0472">Membrane</keyword>
<keyword id="KW-0479">Metal-binding</keyword>
<keyword id="KW-0645">Protease</keyword>
<keyword id="KW-1185">Reference proteome</keyword>
<keyword id="KW-0720">Serine protease</keyword>
<keyword id="KW-0732">Signal</keyword>
<keyword id="KW-0812">Transmembrane</keyword>
<keyword id="KW-1133">Transmembrane helix</keyword>
<keyword id="KW-0865">Zymogen</keyword>
<name>FKPC1_CAEEL</name>
<protein>
    <recommendedName>
        <fullName evidence="14">Furin-like protease kpc-1</fullName>
        <ecNumber evidence="17">3.4.21.-</ecNumber>
    </recommendedName>
    <alternativeName>
        <fullName evidence="15">CelfurPC protein</fullName>
    </alternativeName>
</protein>
<organism>
    <name type="scientific">Caenorhabditis elegans</name>
    <dbReference type="NCBI Taxonomy" id="6239"/>
    <lineage>
        <taxon>Eukaryota</taxon>
        <taxon>Metazoa</taxon>
        <taxon>Ecdysozoa</taxon>
        <taxon>Nematoda</taxon>
        <taxon>Chromadorea</taxon>
        <taxon>Rhabditida</taxon>
        <taxon>Rhabditina</taxon>
        <taxon>Rhabditomorpha</taxon>
        <taxon>Rhabditoidea</taxon>
        <taxon>Rhabditidae</taxon>
        <taxon>Peloderinae</taxon>
        <taxon>Caenorhabditis</taxon>
    </lineage>
</organism>
<proteinExistence type="evidence at protein level"/>
<accession>O17798</accession>
<accession>O17797</accession>
<accession>Q17325</accession>
<reference key="1">
    <citation type="journal article" date="1997" name="DNA Cell Biol.">
        <title>Isolation of a cDNA encoding a Kex2-like endoprotease with homology to furin from the nematode Caenorhabditis elegans.</title>
        <authorList>
            <person name="Gomez-Saladin E."/>
            <person name="Luebke A.E."/>
            <person name="Wilson D.L."/>
            <person name="Dickerson I.M."/>
        </authorList>
    </citation>
    <scope>NUCLEOTIDE SEQUENCE [MRNA]</scope>
    <source>
        <strain>BA713</strain>
    </source>
</reference>
<reference key="2">
    <citation type="journal article" date="1998" name="Science">
        <title>Genome sequence of the nematode C. elegans: a platform for investigating biology.</title>
        <authorList>
            <consortium name="The C. elegans sequencing consortium"/>
        </authorList>
    </citation>
    <scope>NUCLEOTIDE SEQUENCE [LARGE SCALE GENOMIC DNA]</scope>
    <source>
        <strain>Bristol N2</strain>
    </source>
</reference>
<reference evidence="16" key="3">
    <citation type="journal article" date="2013" name="Curr. Biol.">
        <title>Dauer-specific dendrite arborization in C. elegans is regulated by KPC-1/Furin.</title>
        <authorList>
            <person name="Schroeder N.E."/>
            <person name="Androwski R.J."/>
            <person name="Rashid A."/>
            <person name="Lee H."/>
            <person name="Lee J."/>
            <person name="Barr M.M."/>
        </authorList>
    </citation>
    <scope>FUNCTION</scope>
    <scope>SUBCELLULAR LOCATION</scope>
    <scope>TISSUE SPECIFICITY</scope>
    <scope>DEVELOPMENTAL STAGE</scope>
    <scope>MUTAGENESIS OF PRO-440</scope>
    <source>
        <strain evidence="9">Bristol N2</strain>
    </source>
</reference>
<reference key="4">
    <citation type="journal article" date="2014" name="Development">
        <title>A Caenorhabditis elegans developmental decision requires insulin signaling-mediated neuron-intestine communication.</title>
        <authorList>
            <person name="Hung W.L."/>
            <person name="Wang Y."/>
            <person name="Chitturi J."/>
            <person name="Zhen M."/>
        </authorList>
    </citation>
    <scope>FUNCTION</scope>
    <scope>CATALYTIC ACTIVITY</scope>
    <scope>TISSUE SPECIFICITY</scope>
</reference>
<reference key="5">
    <citation type="journal article" date="2014" name="PLoS Genet.">
        <title>The proprotein convertase KPC-1/furin controls branching and self-avoidance of sensory dendrites in Caenorhabditis elegans.</title>
        <authorList>
            <person name="Salzberg Y."/>
            <person name="Ramirez-Suarez N.J."/>
            <person name="Buelow H.E."/>
        </authorList>
    </citation>
    <scope>FUNCTION</scope>
    <scope>TISSUE SPECIFICITY</scope>
    <scope>DEVELOPMENTAL STAGE</scope>
    <scope>DISRUPTION PHENOTYPE</scope>
    <scope>MUTAGENESIS OF GLY-263 AND ARG-265</scope>
</reference>
<reference key="6">
    <citation type="journal article" date="2016" name="Elife">
        <title>Precise regulation of the guidance receptor DMA-1 by KPC-1/Furin instructs dendritic branching decisions.</title>
        <authorList>
            <person name="Dong X."/>
            <person name="Chiu H."/>
            <person name="Park Y.J."/>
            <person name="Zou W."/>
            <person name="Zou Y."/>
            <person name="Oezkan E."/>
            <person name="Chang C."/>
            <person name="Shen K."/>
        </authorList>
    </citation>
    <scope>FUNCTION</scope>
    <scope>INTERACTION WITH DMA-1</scope>
    <scope>DISRUPTION PHENOTYPE</scope>
    <scope>PROTEOLYTIC CLEAVAGE</scope>
    <scope>MUTAGENESIS OF ARG-136; ARG-143 AND PRO-440</scope>
</reference>
<reference key="7">
    <citation type="journal article" date="2017" name="Nat. Neurosci.">
        <title>Glia initiate brain assembly through noncanonical Chimaerin-Furin axon guidance in C. elegans.</title>
        <authorList>
            <person name="Rapti G."/>
            <person name="Li C."/>
            <person name="Shan A."/>
            <person name="Lu Y."/>
            <person name="Shaham S."/>
        </authorList>
    </citation>
    <scope>FUNCTION</scope>
    <scope>DEVELOPMENTAL STAGE</scope>
    <scope>MUTAGENESIS OF SER-579</scope>
</reference>
<gene>
    <name evidence="19" type="primary">kpc-1</name>
    <name evidence="19" type="ORF">F11A6.1</name>
</gene>
<comment type="function">
    <text evidence="9 10 11 12 13">Furin-like protease which cleaves proproteins at the RX(K/R)R consensus motif (PubMed:24671950). During neuronal development, regulates the formation and extension of dendrite branches and cellular positioning of various type of neurons (PubMed:23932402, PubMed:25232734, PubMed:26974341, PubMed:28846083). Together with chin-1 and cdc-42, plays a role in the development of the neuropil and is required for the guidance of axons from neurons, including SubL pioneer neurons and AIY interneurons, into the nerve ring (PubMed:28846083). Its role in axon guidance in glia and pioneer neurons may be through ensuring the fmi-1 protein is correctly localized to the nerve ring (PubMed:28846083). Promotes the formation, extension and self-avoidance of dendritic branches of PVD and FLP mechanosensory neurons (PubMed:23932402, PubMed:25232734, PubMed:26974341). In PVD neurons, regulates plasma membrane levels of branching receptor dma-1 by targeting it to late endosomes and thus promotes normal dendrite branching and dendrite self-avoidance (PubMed:26974341). Also controls dendrite extension in AIY and D-type motoneurons, dendrite branching in AQR sensory neurons and VC4/5 motoneurons, the normal number of dendritic branches in AVL neurons and the positioning of HSN and ALM/PLM neurons (PubMed:25232734). Dispensable for maintaining dendrite branching in adults (PubMed:25232734). Also regulates dauer-specific dendritic branching of IL2 neurons and dauer-specific nictation behavior (PubMed:23932402). Under adverse environmental conditions, may promote dauer formation by processing insulin-like proteins ins-1 and ins-18, two daf-2/InsR antagonists (PubMed:24671950).</text>
</comment>
<comment type="cofactor">
    <cofactor evidence="1">
        <name>Ca(2+)</name>
        <dbReference type="ChEBI" id="CHEBI:29108"/>
    </cofactor>
    <text evidence="1">Binds 3 calcium ions per subunit.</text>
</comment>
<comment type="subunit">
    <text evidence="12">Interacts (via extracellular domain) with receptor dma-1 (via extracellular domain); the interaction promotes dma-1 internalization.</text>
</comment>
<comment type="subcellular location">
    <subcellularLocation>
        <location evidence="18">Cell membrane</location>
        <topology evidence="16">Single-pass type I membrane protein</topology>
    </subcellularLocation>
    <subcellularLocation>
        <location evidence="9">Perikaryon</location>
    </subcellularLocation>
    <subcellularLocation>
        <location evidence="9">Cell projection</location>
        <location evidence="9">Axon</location>
    </subcellularLocation>
    <text evidence="9">In most neurons, localizes exclusively within the cell bodies, but in ventral cord neurons, localizes in both the neuronal cell bodies and processes.</text>
</comment>
<comment type="tissue specificity">
    <text evidence="9 10 11">Expressed in the nervous system including the ventral nerve cord, the nerve ring and the retrovesicular ganglion, and in epithelial cells (PubMed:23932402, PubMed:24671950, PubMed:25232734). Expressed in IL2 neurons (PubMed:23932402). Expressed in PVD mechanosensory neurons (PubMed:25232734). Expressed in pharynx with strong expression in the g2 pharyngeal gland cells and vpi pharyngeal intestinal valve cells (PubMed:23932402, PubMed:25232734). Expressed in intestine (PubMed:24671950).</text>
</comment>
<comment type="developmental stage">
    <text evidence="9 11 13">Expressed in embryos, larvae and adults (PubMed:25232734). Broadly expressed in embryos (PubMed:28846083). Expressed broadly in neuronal and epithelial cells throughout the head during the dauer stage (PubMed:23932402).</text>
</comment>
<comment type="disruption phenotype">
    <text evidence="11 12">Several defects in neuron development (PubMed:25232734, PubMed:26974341). In PVD mechanosensory neurons, tertiary and quaternary branching is decreased, secondary and ectopic tertiary branching is increased, the length of dendritic branches is also reduced and branches tend to overlap (PubMed:25232734, PubMed:26974341). Secondary dendrite branches are trapped next to primary branches (PubMed:26974341). In a sax-7 (nj48) or dma-1 (wy686) mutant background, significantly less secondary dendrites are trapped (PubMed:26974341). Increased dma-1 protein levels in PVD neuron dendrites (PubMed:26974341). In addition, abnormal dendrite branches in FLP neurons, reduced axonal extension in AIY interneurons, abnormal positioning of touch receptor ALM and HSN motoneuron, formation of ectopic branching in AVL, loss of sensory AQR branching in the nerve ring, and impaired extension and formation of branches near the vulva in VC4/5 motoneurons (PubMed:26974341). RNAi-mediated knockdown at the L1 larval stage but not at the L4 larval stage causes defects in the dendritic branching of PVD neurons (PubMed:26974341).</text>
</comment>
<comment type="similarity">
    <text evidence="3">Belongs to the peptidase S8 family. Furin subfamily.</text>
</comment>
<sequence>MSNISWYRHCSVRLQLVTLALFLLLGSASLGSAHIDEEFEDDVTTTISSIASPMRRTYTNEWAVRIAGGKVEEANRLANKYGYTNLGPIIPGDEYYLFRDDRKKSRSSRKTRSLSANQLQHEEDVMWMEQQVAKRRVKRGYRRIRRHTDDNDIFEEDDDGTQISKSRNRKHPDPNDPLWTDMWYLNRGEHHSDSTTRMDHNVKEAWDLGYTGKGVVVTILDDGLERTHPDISPNYDERASYDVNDRDNDPMPRYEFSDENRHGTRCAGEVAAIFNNSLCIVGIAYNANIGGIRMLDGDVTDAVEAASVGHNADYIDIYSASWGPDDDGRTVDGPAKLTRSAFEKGITMGRKGKGSIFVWASGNGGKDADSCNCDGYTNSIYTLSISSATENGNIPWYSEACSSTLATTYSSGATGEKMILTTDLHHACTNMHTGTSASAPLAAGIVALALEANPNLTWRDLQHIVIRTAKPINLRAGDWTTNGVGRNVSHSFGYGLMDAGAMVKLAKIWKKVDEQHRCRQFYPSRYKNIPNGNRLQLQLYSDGCYGGADENKVSYVEHVQAIVTLKAPKRGDLQIYLTSPSGTKSTLLTKRARDTSRSGFTDWAFMTTHNWGEQAAGLWILEIDNDGWDDAELVKWELVLYGTDRETGDFGGQHASPLAVRSVQMEATSSGTQYSIFHVITLVILTFSQILY</sequence>
<evidence type="ECO:0000250" key="1">
    <source>
        <dbReference type="UniProtKB" id="P09958"/>
    </source>
</evidence>
<evidence type="ECO:0000250" key="2">
    <source>
        <dbReference type="UniProtKB" id="P23188"/>
    </source>
</evidence>
<evidence type="ECO:0000255" key="3"/>
<evidence type="ECO:0000255" key="4">
    <source>
        <dbReference type="PROSITE-ProRule" id="PRU00293"/>
    </source>
</evidence>
<evidence type="ECO:0000255" key="5">
    <source>
        <dbReference type="PROSITE-ProRule" id="PRU00498"/>
    </source>
</evidence>
<evidence type="ECO:0000255" key="6">
    <source>
        <dbReference type="PROSITE-ProRule" id="PRU01173"/>
    </source>
</evidence>
<evidence type="ECO:0000255" key="7">
    <source>
        <dbReference type="PROSITE-ProRule" id="PRU01240"/>
    </source>
</evidence>
<evidence type="ECO:0000256" key="8">
    <source>
        <dbReference type="SAM" id="MobiDB-lite"/>
    </source>
</evidence>
<evidence type="ECO:0000269" key="9">
    <source>
    </source>
</evidence>
<evidence type="ECO:0000269" key="10">
    <source>
    </source>
</evidence>
<evidence type="ECO:0000269" key="11">
    <source>
    </source>
</evidence>
<evidence type="ECO:0000269" key="12">
    <source>
    </source>
</evidence>
<evidence type="ECO:0000269" key="13">
    <source>
    </source>
</evidence>
<evidence type="ECO:0000303" key="14">
    <source>
    </source>
</evidence>
<evidence type="ECO:0000303" key="15">
    <source>
    </source>
</evidence>
<evidence type="ECO:0000305" key="16"/>
<evidence type="ECO:0000305" key="17">
    <source>
    </source>
</evidence>
<evidence type="ECO:0000305" key="18">
    <source>
    </source>
</evidence>
<evidence type="ECO:0000312" key="19">
    <source>
        <dbReference type="WormBase" id="F11A6.1a"/>
    </source>
</evidence>